<feature type="chain" id="PRO_1000205988" description="DNA-directed RNA polymerase subunit Rpo1C">
    <location>
        <begin position="1"/>
        <end position="392"/>
    </location>
</feature>
<organism>
    <name type="scientific">Saccharolobus islandicus (strain Y.G.57.14 / Yellowstone #1)</name>
    <name type="common">Sulfolobus islandicus</name>
    <dbReference type="NCBI Taxonomy" id="439386"/>
    <lineage>
        <taxon>Archaea</taxon>
        <taxon>Thermoproteota</taxon>
        <taxon>Thermoprotei</taxon>
        <taxon>Sulfolobales</taxon>
        <taxon>Sulfolobaceae</taxon>
        <taxon>Saccharolobus</taxon>
    </lineage>
</organism>
<gene>
    <name evidence="1" type="primary">rpo1C</name>
    <name evidence="1" type="synonym">rpoA2</name>
    <name type="ordered locus">YG5714_1989</name>
</gene>
<proteinExistence type="inferred from homology"/>
<keyword id="KW-0963">Cytoplasm</keyword>
<keyword id="KW-0238">DNA-binding</keyword>
<keyword id="KW-0240">DNA-directed RNA polymerase</keyword>
<keyword id="KW-0548">Nucleotidyltransferase</keyword>
<keyword id="KW-0804">Transcription</keyword>
<keyword id="KW-0808">Transferase</keyword>
<evidence type="ECO:0000255" key="1">
    <source>
        <dbReference type="HAMAP-Rule" id="MF_00411"/>
    </source>
</evidence>
<dbReference type="EC" id="2.7.7.6" evidence="1"/>
<dbReference type="EMBL" id="CP001403">
    <property type="protein sequence ID" value="ACP46245.1"/>
    <property type="molecule type" value="Genomic_DNA"/>
</dbReference>
<dbReference type="RefSeq" id="WP_012711886.1">
    <property type="nucleotide sequence ID" value="NC_012622.1"/>
</dbReference>
<dbReference type="SMR" id="C3N7Q1"/>
<dbReference type="GeneID" id="84062225"/>
<dbReference type="KEGG" id="siy:YG5714_1989"/>
<dbReference type="HOGENOM" id="CLU_037097_1_0_2"/>
<dbReference type="Proteomes" id="UP000002308">
    <property type="component" value="Chromosome"/>
</dbReference>
<dbReference type="GO" id="GO:0005737">
    <property type="term" value="C:cytoplasm"/>
    <property type="evidence" value="ECO:0007669"/>
    <property type="project" value="UniProtKB-SubCell"/>
</dbReference>
<dbReference type="GO" id="GO:0000428">
    <property type="term" value="C:DNA-directed RNA polymerase complex"/>
    <property type="evidence" value="ECO:0007669"/>
    <property type="project" value="UniProtKB-KW"/>
</dbReference>
<dbReference type="GO" id="GO:0003677">
    <property type="term" value="F:DNA binding"/>
    <property type="evidence" value="ECO:0007669"/>
    <property type="project" value="UniProtKB-UniRule"/>
</dbReference>
<dbReference type="GO" id="GO:0003899">
    <property type="term" value="F:DNA-directed RNA polymerase activity"/>
    <property type="evidence" value="ECO:0007669"/>
    <property type="project" value="UniProtKB-UniRule"/>
</dbReference>
<dbReference type="GO" id="GO:0006351">
    <property type="term" value="P:DNA-templated transcription"/>
    <property type="evidence" value="ECO:0007669"/>
    <property type="project" value="UniProtKB-UniRule"/>
</dbReference>
<dbReference type="CDD" id="cd06528">
    <property type="entry name" value="RNAP_A"/>
    <property type="match status" value="1"/>
</dbReference>
<dbReference type="Gene3D" id="1.10.150.390">
    <property type="match status" value="1"/>
</dbReference>
<dbReference type="HAMAP" id="MF_00411">
    <property type="entry name" value="RNApol_arch_Rpo1C"/>
    <property type="match status" value="1"/>
</dbReference>
<dbReference type="InterPro" id="IPR045867">
    <property type="entry name" value="DNA-dir_RpoC_beta_prime"/>
</dbReference>
<dbReference type="InterPro" id="IPR007081">
    <property type="entry name" value="RNA_pol_Rpb1_5"/>
</dbReference>
<dbReference type="InterPro" id="IPR012757">
    <property type="entry name" value="RPO1C"/>
</dbReference>
<dbReference type="NCBIfam" id="TIGR02389">
    <property type="entry name" value="RNA_pol_rpoA2"/>
    <property type="match status" value="1"/>
</dbReference>
<dbReference type="PANTHER" id="PTHR19376">
    <property type="entry name" value="DNA-DIRECTED RNA POLYMERASE"/>
    <property type="match status" value="1"/>
</dbReference>
<dbReference type="PANTHER" id="PTHR19376:SF32">
    <property type="entry name" value="DNA-DIRECTED RNA POLYMERASE III SUBUNIT RPC1"/>
    <property type="match status" value="1"/>
</dbReference>
<dbReference type="Pfam" id="PF04998">
    <property type="entry name" value="RNA_pol_Rpb1_5"/>
    <property type="match status" value="1"/>
</dbReference>
<dbReference type="SUPFAM" id="SSF64484">
    <property type="entry name" value="beta and beta-prime subunits of DNA dependent RNA-polymerase"/>
    <property type="match status" value="1"/>
</dbReference>
<protein>
    <recommendedName>
        <fullName evidence="1">DNA-directed RNA polymerase subunit Rpo1C</fullName>
        <ecNumber evidence="1">2.7.7.6</ecNumber>
    </recommendedName>
    <alternativeName>
        <fullName evidence="1">DNA-directed RNA polymerase subunit A''</fullName>
    </alternativeName>
</protein>
<comment type="function">
    <text evidence="1">DNA-dependent RNA polymerase (RNAP) catalyzes the transcription of DNA into RNA using the four ribonucleoside triphosphates as substrates. Forms part of the jaw domain.</text>
</comment>
<comment type="catalytic activity">
    <reaction evidence="1">
        <text>RNA(n) + a ribonucleoside 5'-triphosphate = RNA(n+1) + diphosphate</text>
        <dbReference type="Rhea" id="RHEA:21248"/>
        <dbReference type="Rhea" id="RHEA-COMP:14527"/>
        <dbReference type="Rhea" id="RHEA-COMP:17342"/>
        <dbReference type="ChEBI" id="CHEBI:33019"/>
        <dbReference type="ChEBI" id="CHEBI:61557"/>
        <dbReference type="ChEBI" id="CHEBI:140395"/>
        <dbReference type="EC" id="2.7.7.6"/>
    </reaction>
</comment>
<comment type="subunit">
    <text evidence="1">Part of the RNA polymerase complex.</text>
</comment>
<comment type="subcellular location">
    <subcellularLocation>
        <location evidence="1">Cytoplasm</location>
    </subcellularLocation>
</comment>
<comment type="similarity">
    <text evidence="1">Belongs to the RNA polymerase beta' chain family.</text>
</comment>
<sequence length="392" mass="43390">MIDEKDKSYLEEKVKQASNILPQKIVEDLKNLISNKEVLVTRDEIDKIFDLAIKEYSEGLIAPGEAIGIVAAQSVGEPGTQMTLRTFHFAGIRELNVTLGLPRLIEIVDAKKVPSTPMMTIYLTDEYKHDKEKALEVARKLEYTKIENVVSSTSIDIASMSIILQLDNEMLKDKGVTVDDVKKAINRLKLGEFVIDESEGNTLNISFANIDSIAALFKLRDKILNTKIKGIKGIKRAIVQKKGDEYIILTDGSNLSGVLSVKGVDIAKVETNNIREIEEVFGIEAAREIIIREISKVLAEQGLDVDMRHILLVADVMTRTGVVRQIGRHGVTGEKNSVLARAAFEVTVKHLLDAAARGDVEEFKGVVENIIIGHPIKLGTGMVELTMRPILR</sequence>
<name>RPO1C_SACI7</name>
<accession>C3N7Q1</accession>
<reference key="1">
    <citation type="journal article" date="2009" name="Proc. Natl. Acad. Sci. U.S.A.">
        <title>Biogeography of the Sulfolobus islandicus pan-genome.</title>
        <authorList>
            <person name="Reno M.L."/>
            <person name="Held N.L."/>
            <person name="Fields C.J."/>
            <person name="Burke P.V."/>
            <person name="Whitaker R.J."/>
        </authorList>
    </citation>
    <scope>NUCLEOTIDE SEQUENCE [LARGE SCALE GENOMIC DNA]</scope>
    <source>
        <strain>Y.G.57.14 / Yellowstone #1</strain>
    </source>
</reference>